<reference key="1">
    <citation type="journal article" date="1991" name="Nucleic Acids Res.">
        <title>Isolation and genetic structure of the AvaII isoschizomeric restriction-modification system HgiBI from Herpetosiphon giganteus Hpg5: M.HgiBI reveals high homology to M.BanI.</title>
        <authorList>
            <person name="Duesterhoeft A."/>
            <person name="Erdmann D."/>
            <person name="Kroeger M."/>
        </authorList>
    </citation>
    <scope>NUCLEOTIDE SEQUENCE [GENOMIC DNA]</scope>
    <source>
        <strain>HPG5</strain>
    </source>
</reference>
<reference key="2">
    <citation type="journal article" date="1995" name="Gene">
        <title>Organization and gene expression within restriction-modification systems of Herpetosiphon giganteus.</title>
        <authorList>
            <person name="Kroeger M."/>
            <person name="Blum E."/>
            <person name="Deppe E."/>
            <person name="Duesterhoeft A."/>
            <person name="Erdmann D."/>
            <person name="Kilz S."/>
            <person name="Meyer-Rogge S."/>
            <person name="Moestl D."/>
        </authorList>
    </citation>
    <scope>DISCUSSION OF SEQUENCE</scope>
    <scope>FUNCTION</scope>
</reference>
<reference key="3">
    <citation type="journal article" date="2003" name="Nucleic Acids Res.">
        <title>A nomenclature for restriction enzymes, DNA methyltransferases, homing endonucleases and their genes.</title>
        <authorList>
            <person name="Roberts R.J."/>
            <person name="Belfort M."/>
            <person name="Bestor T."/>
            <person name="Bhagwat A.S."/>
            <person name="Bickle T.A."/>
            <person name="Bitinaite J."/>
            <person name="Blumenthal R.M."/>
            <person name="Degtyarev S.K."/>
            <person name="Dryden D.T."/>
            <person name="Dybvig K."/>
            <person name="Firman K."/>
            <person name="Gromova E.S."/>
            <person name="Gumport R.I."/>
            <person name="Halford S.E."/>
            <person name="Hattman S."/>
            <person name="Heitman J."/>
            <person name="Hornby D.P."/>
            <person name="Janulaitis A."/>
            <person name="Jeltsch A."/>
            <person name="Josephsen J."/>
            <person name="Kiss A."/>
            <person name="Klaenhammer T.R."/>
            <person name="Kobayashi I."/>
            <person name="Kong H."/>
            <person name="Krueger D.H."/>
            <person name="Lacks S."/>
            <person name="Marinus M.G."/>
            <person name="Miyahara M."/>
            <person name="Morgan R.D."/>
            <person name="Murray N.E."/>
            <person name="Nagaraja V."/>
            <person name="Piekarowicz A."/>
            <person name="Pingoud A."/>
            <person name="Raleigh E."/>
            <person name="Rao D.N."/>
            <person name="Reich N."/>
            <person name="Repin V.E."/>
            <person name="Selker E.U."/>
            <person name="Shaw P.C."/>
            <person name="Stein D.C."/>
            <person name="Stoddard B.L."/>
            <person name="Szybalski W."/>
            <person name="Trautner T.A."/>
            <person name="Van Etten J.L."/>
            <person name="Vitor J.M."/>
            <person name="Wilson G.G."/>
            <person name="Xu S.Y."/>
        </authorList>
    </citation>
    <scope>NOMENCLATURE</scope>
</reference>
<name>MTB1_HERAU</name>
<feature type="chain" id="PRO_0000087885" description="Type II methyltransferase M.HgiBI">
    <location>
        <begin position="1"/>
        <end position="437"/>
    </location>
</feature>
<feature type="domain" description="SAM-dependent MTase C5-type" evidence="1">
    <location>
        <begin position="4"/>
        <end position="431"/>
    </location>
</feature>
<feature type="active site" evidence="1 2">
    <location>
        <position position="75"/>
    </location>
</feature>
<proteinExistence type="inferred from homology"/>
<keyword id="KW-0238">DNA-binding</keyword>
<keyword id="KW-0489">Methyltransferase</keyword>
<keyword id="KW-0680">Restriction system</keyword>
<keyword id="KW-0949">S-adenosyl-L-methionine</keyword>
<keyword id="KW-0808">Transferase</keyword>
<accession>P25262</accession>
<comment type="function">
    <text evidence="3 4">A methylase that recognizes the double-stranded sequence 5'-GGWCC-3', methylates C-? on both strands, and protects the DNA from cleavage by the HgiBI endonuclease (PubMed:12654995). This system is less active than isoschizomeric RM.HgiEI (PubMed:7607523).</text>
</comment>
<comment type="catalytic activity">
    <reaction evidence="2">
        <text>a 2'-deoxycytidine in DNA + S-adenosyl-L-methionine = a 5-methyl-2'-deoxycytidine in DNA + S-adenosyl-L-homocysteine + H(+)</text>
        <dbReference type="Rhea" id="RHEA:13681"/>
        <dbReference type="Rhea" id="RHEA-COMP:11369"/>
        <dbReference type="Rhea" id="RHEA-COMP:11370"/>
        <dbReference type="ChEBI" id="CHEBI:15378"/>
        <dbReference type="ChEBI" id="CHEBI:57856"/>
        <dbReference type="ChEBI" id="CHEBI:59789"/>
        <dbReference type="ChEBI" id="CHEBI:85452"/>
        <dbReference type="ChEBI" id="CHEBI:85454"/>
        <dbReference type="EC" id="2.1.1.37"/>
    </reaction>
</comment>
<comment type="similarity">
    <text evidence="1">Belongs to the class I-like SAM-binding methyltransferase superfamily. C5-methyltransferase family.</text>
</comment>
<organism>
    <name type="scientific">Herpetosiphon aurantiacus</name>
    <name type="common">Herpetosiphon giganteus</name>
    <dbReference type="NCBI Taxonomy" id="65"/>
    <lineage>
        <taxon>Bacteria</taxon>
        <taxon>Bacillati</taxon>
        <taxon>Chloroflexota</taxon>
        <taxon>Chloroflexia</taxon>
        <taxon>Herpetosiphonales</taxon>
        <taxon>Herpetosiphonaceae</taxon>
        <taxon>Herpetosiphon</taxon>
    </lineage>
</organism>
<gene>
    <name evidence="5" type="primary">hgiBIM</name>
</gene>
<sequence length="437" mass="49627">MQQFRFIDLFAGIGGFRLGLEAVGGVCVASAEIDQQAIKVYRQNWPTDGVDHNLGDITAIQQLPAHDVLVGGVPCQPWSIAGKNQAFDDPRGQLWADVIRLVQINQPKAFIFENVKGLVDPRNRLCLEIILDSFKDLGYSVFYKLLNSFDFGVAQNRDRVFIVGIQQKLDLNGFSFPEYTESEQRLYHILDNLEVPETKLESIPIQRNLFGERIDVGYNKLTPRGAFNDFFILNDIRNGPTSIHSWEIYPTTEREKQICMIIMRNRRNSRYGDCDGNPMSYQDIAELVAGLAEKELQTLVEKRILRQYPDGKYEFFNRRLSGGIDGTYRIFLPNARFFGTLTARGMHDEIAEISVSGANAEEYKHNFIQQVLIPKRYRKITVSEAARLQGFPGSFQFHSNQSANFRLIGNSVAPPVIVALGKALQCVKLFEQELCEV</sequence>
<dbReference type="EC" id="2.1.1.37"/>
<dbReference type="EMBL" id="X55137">
    <property type="protein sequence ID" value="CAA38927.1"/>
    <property type="molecule type" value="Genomic_DNA"/>
</dbReference>
<dbReference type="PIR" id="S22307">
    <property type="entry name" value="S22307"/>
</dbReference>
<dbReference type="SMR" id="P25262"/>
<dbReference type="REBASE" id="203803">
    <property type="entry name" value="M.Keu1446ORF816P"/>
</dbReference>
<dbReference type="REBASE" id="233067">
    <property type="entry name" value="M.SpaF3KORF1926P"/>
</dbReference>
<dbReference type="REBASE" id="256744">
    <property type="entry name" value="M.Ssp9304ORF2562P"/>
</dbReference>
<dbReference type="REBASE" id="3414">
    <property type="entry name" value="M.HgiBI"/>
</dbReference>
<dbReference type="PRO" id="PR:P25262"/>
<dbReference type="GO" id="GO:0003886">
    <property type="term" value="F:DNA (cytosine-5-)-methyltransferase activity"/>
    <property type="evidence" value="ECO:0007669"/>
    <property type="project" value="UniProtKB-EC"/>
</dbReference>
<dbReference type="GO" id="GO:0003677">
    <property type="term" value="F:DNA binding"/>
    <property type="evidence" value="ECO:0007669"/>
    <property type="project" value="UniProtKB-KW"/>
</dbReference>
<dbReference type="GO" id="GO:0009307">
    <property type="term" value="P:DNA restriction-modification system"/>
    <property type="evidence" value="ECO:0007669"/>
    <property type="project" value="UniProtKB-KW"/>
</dbReference>
<dbReference type="GO" id="GO:0032259">
    <property type="term" value="P:methylation"/>
    <property type="evidence" value="ECO:0007669"/>
    <property type="project" value="UniProtKB-KW"/>
</dbReference>
<dbReference type="GO" id="GO:0044027">
    <property type="term" value="P:negative regulation of gene expression via chromosomal CpG island methylation"/>
    <property type="evidence" value="ECO:0007669"/>
    <property type="project" value="TreeGrafter"/>
</dbReference>
<dbReference type="CDD" id="cd00315">
    <property type="entry name" value="Cyt_C5_DNA_methylase"/>
    <property type="match status" value="1"/>
</dbReference>
<dbReference type="Gene3D" id="3.90.120.10">
    <property type="entry name" value="DNA Methylase, subunit A, domain 2"/>
    <property type="match status" value="1"/>
</dbReference>
<dbReference type="Gene3D" id="3.40.50.150">
    <property type="entry name" value="Vaccinia Virus protein VP39"/>
    <property type="match status" value="1"/>
</dbReference>
<dbReference type="InterPro" id="IPR050390">
    <property type="entry name" value="C5-Methyltransferase"/>
</dbReference>
<dbReference type="InterPro" id="IPR018117">
    <property type="entry name" value="C5_DNA_meth_AS"/>
</dbReference>
<dbReference type="InterPro" id="IPR001525">
    <property type="entry name" value="C5_MeTfrase"/>
</dbReference>
<dbReference type="InterPro" id="IPR031303">
    <property type="entry name" value="C5_meth_CS"/>
</dbReference>
<dbReference type="InterPro" id="IPR029063">
    <property type="entry name" value="SAM-dependent_MTases_sf"/>
</dbReference>
<dbReference type="NCBIfam" id="TIGR00675">
    <property type="entry name" value="dcm"/>
    <property type="match status" value="1"/>
</dbReference>
<dbReference type="PANTHER" id="PTHR10629">
    <property type="entry name" value="CYTOSINE-SPECIFIC METHYLTRANSFERASE"/>
    <property type="match status" value="1"/>
</dbReference>
<dbReference type="PANTHER" id="PTHR10629:SF52">
    <property type="entry name" value="DNA (CYTOSINE-5)-METHYLTRANSFERASE 1"/>
    <property type="match status" value="1"/>
</dbReference>
<dbReference type="Pfam" id="PF00145">
    <property type="entry name" value="DNA_methylase"/>
    <property type="match status" value="1"/>
</dbReference>
<dbReference type="PRINTS" id="PR00105">
    <property type="entry name" value="C5METTRFRASE"/>
</dbReference>
<dbReference type="SUPFAM" id="SSF53335">
    <property type="entry name" value="S-adenosyl-L-methionine-dependent methyltransferases"/>
    <property type="match status" value="1"/>
</dbReference>
<dbReference type="PROSITE" id="PS00094">
    <property type="entry name" value="C5_MTASE_1"/>
    <property type="match status" value="1"/>
</dbReference>
<dbReference type="PROSITE" id="PS00095">
    <property type="entry name" value="C5_MTASE_2"/>
    <property type="match status" value="1"/>
</dbReference>
<dbReference type="PROSITE" id="PS51679">
    <property type="entry name" value="SAM_MT_C5"/>
    <property type="match status" value="1"/>
</dbReference>
<protein>
    <recommendedName>
        <fullName evidence="4">Type II methyltransferase M.HgiBI</fullName>
        <shortName evidence="5">M.HgiBI</shortName>
        <ecNumber>2.1.1.37</ecNumber>
    </recommendedName>
    <alternativeName>
        <fullName>Cytosine-specific methyltransferase HgiBI</fullName>
    </alternativeName>
    <alternativeName>
        <fullName>Modification methylase HgiBI</fullName>
    </alternativeName>
</protein>
<evidence type="ECO:0000255" key="1">
    <source>
        <dbReference type="PROSITE-ProRule" id="PRU01016"/>
    </source>
</evidence>
<evidence type="ECO:0000255" key="2">
    <source>
        <dbReference type="PROSITE-ProRule" id="PRU10018"/>
    </source>
</evidence>
<evidence type="ECO:0000269" key="3">
    <source>
    </source>
</evidence>
<evidence type="ECO:0000303" key="4">
    <source>
    </source>
</evidence>
<evidence type="ECO:0000303" key="5">
    <source>
    </source>
</evidence>